<proteinExistence type="evidence at transcript level"/>
<organism>
    <name type="scientific">Arabidopsis thaliana</name>
    <name type="common">Mouse-ear cress</name>
    <dbReference type="NCBI Taxonomy" id="3702"/>
    <lineage>
        <taxon>Eukaryota</taxon>
        <taxon>Viridiplantae</taxon>
        <taxon>Streptophyta</taxon>
        <taxon>Embryophyta</taxon>
        <taxon>Tracheophyta</taxon>
        <taxon>Spermatophyta</taxon>
        <taxon>Magnoliopsida</taxon>
        <taxon>eudicotyledons</taxon>
        <taxon>Gunneridae</taxon>
        <taxon>Pentapetalae</taxon>
        <taxon>rosids</taxon>
        <taxon>malvids</taxon>
        <taxon>Brassicales</taxon>
        <taxon>Brassicaceae</taxon>
        <taxon>Camelineae</taxon>
        <taxon>Arabidopsis</taxon>
    </lineage>
</organism>
<keyword id="KW-0025">Alternative splicing</keyword>
<keyword id="KW-0378">Hydrolase</keyword>
<keyword id="KW-0460">Magnesium</keyword>
<keyword id="KW-0464">Manganese</keyword>
<keyword id="KW-0479">Metal-binding</keyword>
<keyword id="KW-0904">Protein phosphatase</keyword>
<keyword id="KW-1185">Reference proteome</keyword>
<accession>Q9T010</accession>
<accession>O81613</accession>
<protein>
    <recommendedName>
        <fullName>Probable protein phosphatase 2C 54</fullName>
        <shortName>AtPP2C54</shortName>
        <ecNumber>3.1.3.16</ecNumber>
    </recommendedName>
</protein>
<reference key="1">
    <citation type="journal article" date="1999" name="Nature">
        <title>Sequence and analysis of chromosome 4 of the plant Arabidopsis thaliana.</title>
        <authorList>
            <person name="Mayer K.F.X."/>
            <person name="Schueller C."/>
            <person name="Wambutt R."/>
            <person name="Murphy G."/>
            <person name="Volckaert G."/>
            <person name="Pohl T."/>
            <person name="Duesterhoeft A."/>
            <person name="Stiekema W."/>
            <person name="Entian K.-D."/>
            <person name="Terryn N."/>
            <person name="Harris B."/>
            <person name="Ansorge W."/>
            <person name="Brandt P."/>
            <person name="Grivell L.A."/>
            <person name="Rieger M."/>
            <person name="Weichselgartner M."/>
            <person name="de Simone V."/>
            <person name="Obermaier B."/>
            <person name="Mache R."/>
            <person name="Mueller M."/>
            <person name="Kreis M."/>
            <person name="Delseny M."/>
            <person name="Puigdomenech P."/>
            <person name="Watson M."/>
            <person name="Schmidtheini T."/>
            <person name="Reichert B."/>
            <person name="Portetelle D."/>
            <person name="Perez-Alonso M."/>
            <person name="Boutry M."/>
            <person name="Bancroft I."/>
            <person name="Vos P."/>
            <person name="Hoheisel J."/>
            <person name="Zimmermann W."/>
            <person name="Wedler H."/>
            <person name="Ridley P."/>
            <person name="Langham S.-A."/>
            <person name="McCullagh B."/>
            <person name="Bilham L."/>
            <person name="Robben J."/>
            <person name="van der Schueren J."/>
            <person name="Grymonprez B."/>
            <person name="Chuang Y.-J."/>
            <person name="Vandenbussche F."/>
            <person name="Braeken M."/>
            <person name="Weltjens I."/>
            <person name="Voet M."/>
            <person name="Bastiaens I."/>
            <person name="Aert R."/>
            <person name="Defoor E."/>
            <person name="Weitzenegger T."/>
            <person name="Bothe G."/>
            <person name="Ramsperger U."/>
            <person name="Hilbert H."/>
            <person name="Braun M."/>
            <person name="Holzer E."/>
            <person name="Brandt A."/>
            <person name="Peters S."/>
            <person name="van Staveren M."/>
            <person name="Dirkse W."/>
            <person name="Mooijman P."/>
            <person name="Klein Lankhorst R."/>
            <person name="Rose M."/>
            <person name="Hauf J."/>
            <person name="Koetter P."/>
            <person name="Berneiser S."/>
            <person name="Hempel S."/>
            <person name="Feldpausch M."/>
            <person name="Lamberth S."/>
            <person name="Van den Daele H."/>
            <person name="De Keyser A."/>
            <person name="Buysshaert C."/>
            <person name="Gielen J."/>
            <person name="Villarroel R."/>
            <person name="De Clercq R."/>
            <person name="van Montagu M."/>
            <person name="Rogers J."/>
            <person name="Cronin A."/>
            <person name="Quail M.A."/>
            <person name="Bray-Allen S."/>
            <person name="Clark L."/>
            <person name="Doggett J."/>
            <person name="Hall S."/>
            <person name="Kay M."/>
            <person name="Lennard N."/>
            <person name="McLay K."/>
            <person name="Mayes R."/>
            <person name="Pettett A."/>
            <person name="Rajandream M.A."/>
            <person name="Lyne M."/>
            <person name="Benes V."/>
            <person name="Rechmann S."/>
            <person name="Borkova D."/>
            <person name="Bloecker H."/>
            <person name="Scharfe M."/>
            <person name="Grimm M."/>
            <person name="Loehnert T.-H."/>
            <person name="Dose S."/>
            <person name="de Haan M."/>
            <person name="Maarse A.C."/>
            <person name="Schaefer M."/>
            <person name="Mueller-Auer S."/>
            <person name="Gabel C."/>
            <person name="Fuchs M."/>
            <person name="Fartmann B."/>
            <person name="Granderath K."/>
            <person name="Dauner D."/>
            <person name="Herzl A."/>
            <person name="Neumann S."/>
            <person name="Argiriou A."/>
            <person name="Vitale D."/>
            <person name="Liguori R."/>
            <person name="Piravandi E."/>
            <person name="Massenet O."/>
            <person name="Quigley F."/>
            <person name="Clabauld G."/>
            <person name="Muendlein A."/>
            <person name="Felber R."/>
            <person name="Schnabl S."/>
            <person name="Hiller R."/>
            <person name="Schmidt W."/>
            <person name="Lecharny A."/>
            <person name="Aubourg S."/>
            <person name="Chefdor F."/>
            <person name="Cooke R."/>
            <person name="Berger C."/>
            <person name="Monfort A."/>
            <person name="Casacuberta E."/>
            <person name="Gibbons T."/>
            <person name="Weber N."/>
            <person name="Vandenbol M."/>
            <person name="Bargues M."/>
            <person name="Terol J."/>
            <person name="Torres A."/>
            <person name="Perez-Perez A."/>
            <person name="Purnelle B."/>
            <person name="Bent E."/>
            <person name="Johnson S."/>
            <person name="Tacon D."/>
            <person name="Jesse T."/>
            <person name="Heijnen L."/>
            <person name="Schwarz S."/>
            <person name="Scholler P."/>
            <person name="Heber S."/>
            <person name="Francs P."/>
            <person name="Bielke C."/>
            <person name="Frishman D."/>
            <person name="Haase D."/>
            <person name="Lemcke K."/>
            <person name="Mewes H.-W."/>
            <person name="Stocker S."/>
            <person name="Zaccaria P."/>
            <person name="Bevan M."/>
            <person name="Wilson R.K."/>
            <person name="de la Bastide M."/>
            <person name="Habermann K."/>
            <person name="Parnell L."/>
            <person name="Dedhia N."/>
            <person name="Gnoj L."/>
            <person name="Schutz K."/>
            <person name="Huang E."/>
            <person name="Spiegel L."/>
            <person name="Sekhon M."/>
            <person name="Murray J."/>
            <person name="Sheet P."/>
            <person name="Cordes M."/>
            <person name="Abu-Threideh J."/>
            <person name="Stoneking T."/>
            <person name="Kalicki J."/>
            <person name="Graves T."/>
            <person name="Harmon G."/>
            <person name="Edwards J."/>
            <person name="Latreille P."/>
            <person name="Courtney L."/>
            <person name="Cloud J."/>
            <person name="Abbott A."/>
            <person name="Scott K."/>
            <person name="Johnson D."/>
            <person name="Minx P."/>
            <person name="Bentley D."/>
            <person name="Fulton B."/>
            <person name="Miller N."/>
            <person name="Greco T."/>
            <person name="Kemp K."/>
            <person name="Kramer J."/>
            <person name="Fulton L."/>
            <person name="Mardis E."/>
            <person name="Dante M."/>
            <person name="Pepin K."/>
            <person name="Hillier L.W."/>
            <person name="Nelson J."/>
            <person name="Spieth J."/>
            <person name="Ryan E."/>
            <person name="Andrews S."/>
            <person name="Geisel C."/>
            <person name="Layman D."/>
            <person name="Du H."/>
            <person name="Ali J."/>
            <person name="Berghoff A."/>
            <person name="Jones K."/>
            <person name="Drone K."/>
            <person name="Cotton M."/>
            <person name="Joshu C."/>
            <person name="Antonoiu B."/>
            <person name="Zidanic M."/>
            <person name="Strong C."/>
            <person name="Sun H."/>
            <person name="Lamar B."/>
            <person name="Yordan C."/>
            <person name="Ma P."/>
            <person name="Zhong J."/>
            <person name="Preston R."/>
            <person name="Vil D."/>
            <person name="Shekher M."/>
            <person name="Matero A."/>
            <person name="Shah R."/>
            <person name="Swaby I.K."/>
            <person name="O'Shaughnessy A."/>
            <person name="Rodriguez M."/>
            <person name="Hoffman J."/>
            <person name="Till S."/>
            <person name="Granat S."/>
            <person name="Shohdy N."/>
            <person name="Hasegawa A."/>
            <person name="Hameed A."/>
            <person name="Lodhi M."/>
            <person name="Johnson A."/>
            <person name="Chen E."/>
            <person name="Marra M.A."/>
            <person name="Martienssen R."/>
            <person name="McCombie W.R."/>
        </authorList>
    </citation>
    <scope>NUCLEOTIDE SEQUENCE [LARGE SCALE GENOMIC DNA]</scope>
    <source>
        <strain>cv. Columbia</strain>
    </source>
</reference>
<reference key="2">
    <citation type="journal article" date="2017" name="Plant J.">
        <title>Araport11: a complete reannotation of the Arabidopsis thaliana reference genome.</title>
        <authorList>
            <person name="Cheng C.Y."/>
            <person name="Krishnakumar V."/>
            <person name="Chan A.P."/>
            <person name="Thibaud-Nissen F."/>
            <person name="Schobel S."/>
            <person name="Town C.D."/>
        </authorList>
    </citation>
    <scope>GENOME REANNOTATION</scope>
    <source>
        <strain>cv. Columbia</strain>
    </source>
</reference>
<reference key="3">
    <citation type="journal article" date="2003" name="Science">
        <title>Empirical analysis of transcriptional activity in the Arabidopsis genome.</title>
        <authorList>
            <person name="Yamada K."/>
            <person name="Lim J."/>
            <person name="Dale J.M."/>
            <person name="Chen H."/>
            <person name="Shinn P."/>
            <person name="Palm C.J."/>
            <person name="Southwick A.M."/>
            <person name="Wu H.C."/>
            <person name="Kim C.J."/>
            <person name="Nguyen M."/>
            <person name="Pham P.K."/>
            <person name="Cheuk R.F."/>
            <person name="Karlin-Newmann G."/>
            <person name="Liu S.X."/>
            <person name="Lam B."/>
            <person name="Sakano H."/>
            <person name="Wu T."/>
            <person name="Yu G."/>
            <person name="Miranda M."/>
            <person name="Quach H.L."/>
            <person name="Tripp M."/>
            <person name="Chang C.H."/>
            <person name="Lee J.M."/>
            <person name="Toriumi M.J."/>
            <person name="Chan M.M."/>
            <person name="Tang C.C."/>
            <person name="Onodera C.S."/>
            <person name="Deng J.M."/>
            <person name="Akiyama K."/>
            <person name="Ansari Y."/>
            <person name="Arakawa T."/>
            <person name="Banh J."/>
            <person name="Banno F."/>
            <person name="Bowser L."/>
            <person name="Brooks S.Y."/>
            <person name="Carninci P."/>
            <person name="Chao Q."/>
            <person name="Choy N."/>
            <person name="Enju A."/>
            <person name="Goldsmith A.D."/>
            <person name="Gurjal M."/>
            <person name="Hansen N.F."/>
            <person name="Hayashizaki Y."/>
            <person name="Johnson-Hopson C."/>
            <person name="Hsuan V.W."/>
            <person name="Iida K."/>
            <person name="Karnes M."/>
            <person name="Khan S."/>
            <person name="Koesema E."/>
            <person name="Ishida J."/>
            <person name="Jiang P.X."/>
            <person name="Jones T."/>
            <person name="Kawai J."/>
            <person name="Kamiya A."/>
            <person name="Meyers C."/>
            <person name="Nakajima M."/>
            <person name="Narusaka M."/>
            <person name="Seki M."/>
            <person name="Sakurai T."/>
            <person name="Satou M."/>
            <person name="Tamse R."/>
            <person name="Vaysberg M."/>
            <person name="Wallender E.K."/>
            <person name="Wong C."/>
            <person name="Yamamura Y."/>
            <person name="Yuan S."/>
            <person name="Shinozaki K."/>
            <person name="Davis R.W."/>
            <person name="Theologis A."/>
            <person name="Ecker J.R."/>
        </authorList>
    </citation>
    <scope>NUCLEOTIDE SEQUENCE [LARGE SCALE MRNA]</scope>
    <source>
        <strain>cv. Columbia</strain>
    </source>
</reference>
<reference key="4">
    <citation type="journal article" date="2008" name="BMC Genomics">
        <title>Genome-wide and expression analysis of protein phosphatase 2C in rice and Arabidopsis.</title>
        <authorList>
            <person name="Xue T."/>
            <person name="Wang D."/>
            <person name="Zhang S."/>
            <person name="Ehlting J."/>
            <person name="Ni F."/>
            <person name="Jacab S."/>
            <person name="Zheng C."/>
            <person name="Zhong Y."/>
        </authorList>
    </citation>
    <scope>GENE FAMILY</scope>
    <scope>NOMENCLATURE</scope>
</reference>
<name>P2C54_ARATH</name>
<evidence type="ECO:0000250" key="1"/>
<evidence type="ECO:0000255" key="2">
    <source>
        <dbReference type="PROSITE-ProRule" id="PRU01082"/>
    </source>
</evidence>
<evidence type="ECO:0000305" key="3"/>
<gene>
    <name type="ordered locus">At4g11040</name>
    <name type="ORF">F8M12.14</name>
    <name type="ORF">T22B4.20</name>
</gene>
<feature type="chain" id="PRO_0000367978" description="Probable protein phosphatase 2C 54">
    <location>
        <begin position="1"/>
        <end position="295"/>
    </location>
</feature>
<feature type="domain" description="PPM-type phosphatase" evidence="2">
    <location>
        <begin position="78"/>
        <end position="289"/>
    </location>
</feature>
<feature type="binding site" evidence="1">
    <location>
        <position position="112"/>
    </location>
    <ligand>
        <name>Mn(2+)</name>
        <dbReference type="ChEBI" id="CHEBI:29035"/>
        <label>1</label>
    </ligand>
</feature>
<feature type="binding site" evidence="1">
    <location>
        <position position="112"/>
    </location>
    <ligand>
        <name>Mn(2+)</name>
        <dbReference type="ChEBI" id="CHEBI:29035"/>
        <label>2</label>
    </ligand>
</feature>
<feature type="binding site" evidence="1">
    <location>
        <position position="113"/>
    </location>
    <ligand>
        <name>Mn(2+)</name>
        <dbReference type="ChEBI" id="CHEBI:29035"/>
        <label>1</label>
    </ligand>
</feature>
<feature type="binding site" evidence="1">
    <location>
        <position position="228"/>
    </location>
    <ligand>
        <name>Mn(2+)</name>
        <dbReference type="ChEBI" id="CHEBI:29035"/>
        <label>2</label>
    </ligand>
</feature>
<feature type="binding site" evidence="1">
    <location>
        <position position="280"/>
    </location>
    <ligand>
        <name>Mn(2+)</name>
        <dbReference type="ChEBI" id="CHEBI:29035"/>
        <label>2</label>
    </ligand>
</feature>
<comment type="catalytic activity">
    <reaction>
        <text>O-phospho-L-seryl-[protein] + H2O = L-seryl-[protein] + phosphate</text>
        <dbReference type="Rhea" id="RHEA:20629"/>
        <dbReference type="Rhea" id="RHEA-COMP:9863"/>
        <dbReference type="Rhea" id="RHEA-COMP:11604"/>
        <dbReference type="ChEBI" id="CHEBI:15377"/>
        <dbReference type="ChEBI" id="CHEBI:29999"/>
        <dbReference type="ChEBI" id="CHEBI:43474"/>
        <dbReference type="ChEBI" id="CHEBI:83421"/>
        <dbReference type="EC" id="3.1.3.16"/>
    </reaction>
</comment>
<comment type="catalytic activity">
    <reaction>
        <text>O-phospho-L-threonyl-[protein] + H2O = L-threonyl-[protein] + phosphate</text>
        <dbReference type="Rhea" id="RHEA:47004"/>
        <dbReference type="Rhea" id="RHEA-COMP:11060"/>
        <dbReference type="Rhea" id="RHEA-COMP:11605"/>
        <dbReference type="ChEBI" id="CHEBI:15377"/>
        <dbReference type="ChEBI" id="CHEBI:30013"/>
        <dbReference type="ChEBI" id="CHEBI:43474"/>
        <dbReference type="ChEBI" id="CHEBI:61977"/>
        <dbReference type="EC" id="3.1.3.16"/>
    </reaction>
</comment>
<comment type="cofactor">
    <cofactor evidence="1">
        <name>Mg(2+)</name>
        <dbReference type="ChEBI" id="CHEBI:18420"/>
    </cofactor>
    <cofactor evidence="1">
        <name>Mn(2+)</name>
        <dbReference type="ChEBI" id="CHEBI:29035"/>
    </cofactor>
    <text evidence="1">Binds 2 magnesium or manganese ions per subunit.</text>
</comment>
<comment type="alternative products">
    <event type="alternative splicing"/>
    <isoform>
        <id>Q9T010-1</id>
        <name>1</name>
        <sequence type="displayed"/>
    </isoform>
    <text>A number of isoforms are produced. According to EST sequences.</text>
</comment>
<comment type="similarity">
    <text evidence="3">Belongs to the PP2C family.</text>
</comment>
<comment type="sequence caution" evidence="3">
    <conflict type="erroneous gene model prediction">
        <sequence resource="EMBL-CDS" id="AAC33957"/>
    </conflict>
</comment>
<sequence>MKTDTTLPIIAEDGDCGDSKRVRVADSGYTVGGQDRPVKLPKIENNGDVGTSEGTHVLVDALMAEVAIKDKDGKTNAGHGVVSVMGRQRAMTTAVSTVVDEIPSYDIFGIFDGLRLAKFFEDRLRRLVKEEVKACHGRGVAADWNKVMKSCFSEAVGTVGTTTSAVVTIVGKEEVIVLCRGGARVVLYSHDGVALPLCHIHHHKDGVEQILKIHKRKKIDDFIVLACDGLWDVVSDDDTYQLVKRCLYGKLPPDGCISESSSTKAAVILAELAIARGSKENINVIVIDLKSSTVS</sequence>
<dbReference type="EC" id="3.1.3.16"/>
<dbReference type="EMBL" id="AF080118">
    <property type="protein sequence ID" value="AAC33957.1"/>
    <property type="status" value="ALT_SEQ"/>
    <property type="molecule type" value="Genomic_DNA"/>
</dbReference>
<dbReference type="EMBL" id="AL049876">
    <property type="protein sequence ID" value="CAB43039.1"/>
    <property type="molecule type" value="Genomic_DNA"/>
</dbReference>
<dbReference type="EMBL" id="AL161518">
    <property type="protein sequence ID" value="CAB81205.1"/>
    <property type="molecule type" value="Genomic_DNA"/>
</dbReference>
<dbReference type="EMBL" id="CP002687">
    <property type="protein sequence ID" value="AEE82964.1"/>
    <property type="molecule type" value="Genomic_DNA"/>
</dbReference>
<dbReference type="EMBL" id="AY133684">
    <property type="protein sequence ID" value="AAM91618.1"/>
    <property type="molecule type" value="mRNA"/>
</dbReference>
<dbReference type="PIR" id="T01874">
    <property type="entry name" value="T01874"/>
</dbReference>
<dbReference type="PIR" id="T08183">
    <property type="entry name" value="T08183"/>
</dbReference>
<dbReference type="RefSeq" id="NP_192842.1">
    <molecule id="Q9T010-1"/>
    <property type="nucleotide sequence ID" value="NM_117174.3"/>
</dbReference>
<dbReference type="SMR" id="Q9T010"/>
<dbReference type="STRING" id="3702.Q9T010"/>
<dbReference type="PaxDb" id="3702-AT4G11040.1"/>
<dbReference type="ProteomicsDB" id="248721">
    <molecule id="Q9T010-1"/>
</dbReference>
<dbReference type="EnsemblPlants" id="AT4G11040.1">
    <molecule id="Q9T010-1"/>
    <property type="protein sequence ID" value="AT4G11040.1"/>
    <property type="gene ID" value="AT4G11040"/>
</dbReference>
<dbReference type="GeneID" id="826705"/>
<dbReference type="Gramene" id="AT4G11040.1">
    <molecule id="Q9T010-1"/>
    <property type="protein sequence ID" value="AT4G11040.1"/>
    <property type="gene ID" value="AT4G11040"/>
</dbReference>
<dbReference type="KEGG" id="ath:AT4G11040"/>
<dbReference type="Araport" id="AT4G11040"/>
<dbReference type="TAIR" id="AT4G11040">
    <property type="gene designation" value="RDO5"/>
</dbReference>
<dbReference type="eggNOG" id="KOG0698">
    <property type="taxonomic scope" value="Eukaryota"/>
</dbReference>
<dbReference type="HOGENOM" id="CLU_082245_0_0_1"/>
<dbReference type="InParanoid" id="Q9T010"/>
<dbReference type="OMA" id="CDIHRHQ"/>
<dbReference type="PhylomeDB" id="Q9T010"/>
<dbReference type="PRO" id="PR:Q9T010"/>
<dbReference type="Proteomes" id="UP000006548">
    <property type="component" value="Chromosome 4"/>
</dbReference>
<dbReference type="ExpressionAtlas" id="Q9T010">
    <property type="expression patterns" value="baseline and differential"/>
</dbReference>
<dbReference type="GO" id="GO:0005634">
    <property type="term" value="C:nucleus"/>
    <property type="evidence" value="ECO:0000314"/>
    <property type="project" value="TAIR"/>
</dbReference>
<dbReference type="GO" id="GO:0046872">
    <property type="term" value="F:metal ion binding"/>
    <property type="evidence" value="ECO:0007669"/>
    <property type="project" value="UniProtKB-KW"/>
</dbReference>
<dbReference type="GO" id="GO:0004721">
    <property type="term" value="F:phosphoprotein phosphatase activity"/>
    <property type="evidence" value="ECO:0000314"/>
    <property type="project" value="TAIR"/>
</dbReference>
<dbReference type="GO" id="GO:0004722">
    <property type="term" value="F:protein serine/threonine phosphatase activity"/>
    <property type="evidence" value="ECO:0000304"/>
    <property type="project" value="TAIR"/>
</dbReference>
<dbReference type="GO" id="GO:0001691">
    <property type="term" value="F:pseudophosphatase activity"/>
    <property type="evidence" value="ECO:0000314"/>
    <property type="project" value="TAIR"/>
</dbReference>
<dbReference type="GO" id="GO:1902040">
    <property type="term" value="P:positive regulation of seed dormancy process"/>
    <property type="evidence" value="ECO:0000315"/>
    <property type="project" value="TAIR"/>
</dbReference>
<dbReference type="GO" id="GO:0010162">
    <property type="term" value="P:seed dormancy process"/>
    <property type="evidence" value="ECO:0000315"/>
    <property type="project" value="TAIR"/>
</dbReference>
<dbReference type="CDD" id="cd00143">
    <property type="entry name" value="PP2Cc"/>
    <property type="match status" value="1"/>
</dbReference>
<dbReference type="FunFam" id="3.60.40.10:FF:000219">
    <property type="entry name" value="Probable protein phosphatase 2C 54"/>
    <property type="match status" value="1"/>
</dbReference>
<dbReference type="Gene3D" id="3.60.40.10">
    <property type="entry name" value="PPM-type phosphatase domain"/>
    <property type="match status" value="2"/>
</dbReference>
<dbReference type="InterPro" id="IPR015655">
    <property type="entry name" value="PP2C"/>
</dbReference>
<dbReference type="InterPro" id="IPR036457">
    <property type="entry name" value="PPM-type-like_dom_sf"/>
</dbReference>
<dbReference type="InterPro" id="IPR001932">
    <property type="entry name" value="PPM-type_phosphatase-like_dom"/>
</dbReference>
<dbReference type="PANTHER" id="PTHR47992">
    <property type="entry name" value="PROTEIN PHOSPHATASE"/>
    <property type="match status" value="1"/>
</dbReference>
<dbReference type="Pfam" id="PF00481">
    <property type="entry name" value="PP2C"/>
    <property type="match status" value="1"/>
</dbReference>
<dbReference type="SMART" id="SM00332">
    <property type="entry name" value="PP2Cc"/>
    <property type="match status" value="1"/>
</dbReference>
<dbReference type="SUPFAM" id="SSF81606">
    <property type="entry name" value="PP2C-like"/>
    <property type="match status" value="1"/>
</dbReference>
<dbReference type="PROSITE" id="PS51746">
    <property type="entry name" value="PPM_2"/>
    <property type="match status" value="1"/>
</dbReference>